<feature type="chain" id="PRO_1000203523" description="Phosphoserine aminotransferase">
    <location>
        <begin position="1"/>
        <end position="362"/>
    </location>
</feature>
<feature type="binding site" evidence="1">
    <location>
        <position position="9"/>
    </location>
    <ligand>
        <name>L-glutamate</name>
        <dbReference type="ChEBI" id="CHEBI:29985"/>
    </ligand>
</feature>
<feature type="binding site" evidence="1">
    <location>
        <position position="42"/>
    </location>
    <ligand>
        <name>L-glutamate</name>
        <dbReference type="ChEBI" id="CHEBI:29985"/>
    </ligand>
</feature>
<feature type="binding site" evidence="1">
    <location>
        <begin position="76"/>
        <end position="77"/>
    </location>
    <ligand>
        <name>pyridoxal 5'-phosphate</name>
        <dbReference type="ChEBI" id="CHEBI:597326"/>
    </ligand>
</feature>
<feature type="binding site" evidence="1">
    <location>
        <position position="102"/>
    </location>
    <ligand>
        <name>pyridoxal 5'-phosphate</name>
        <dbReference type="ChEBI" id="CHEBI:597326"/>
    </ligand>
</feature>
<feature type="binding site" evidence="1">
    <location>
        <position position="153"/>
    </location>
    <ligand>
        <name>pyridoxal 5'-phosphate</name>
        <dbReference type="ChEBI" id="CHEBI:597326"/>
    </ligand>
</feature>
<feature type="binding site" evidence="1">
    <location>
        <position position="174"/>
    </location>
    <ligand>
        <name>pyridoxal 5'-phosphate</name>
        <dbReference type="ChEBI" id="CHEBI:597326"/>
    </ligand>
</feature>
<feature type="binding site" evidence="1">
    <location>
        <position position="197"/>
    </location>
    <ligand>
        <name>pyridoxal 5'-phosphate</name>
        <dbReference type="ChEBI" id="CHEBI:597326"/>
    </ligand>
</feature>
<feature type="binding site" evidence="1">
    <location>
        <begin position="239"/>
        <end position="240"/>
    </location>
    <ligand>
        <name>pyridoxal 5'-phosphate</name>
        <dbReference type="ChEBI" id="CHEBI:597326"/>
    </ligand>
</feature>
<feature type="modified residue" description="N6-(pyridoxal phosphate)lysine" evidence="1">
    <location>
        <position position="198"/>
    </location>
</feature>
<protein>
    <recommendedName>
        <fullName evidence="1">Phosphoserine aminotransferase</fullName>
        <ecNumber evidence="1">2.6.1.52</ecNumber>
    </recommendedName>
    <alternativeName>
        <fullName evidence="1">Phosphohydroxythreonine aminotransferase</fullName>
        <shortName evidence="1">PSAT</shortName>
    </alternativeName>
</protein>
<gene>
    <name evidence="1" type="primary">serC</name>
    <name type="ordered locus">ECIAI39_2241</name>
</gene>
<organism>
    <name type="scientific">Escherichia coli O7:K1 (strain IAI39 / ExPEC)</name>
    <dbReference type="NCBI Taxonomy" id="585057"/>
    <lineage>
        <taxon>Bacteria</taxon>
        <taxon>Pseudomonadati</taxon>
        <taxon>Pseudomonadota</taxon>
        <taxon>Gammaproteobacteria</taxon>
        <taxon>Enterobacterales</taxon>
        <taxon>Enterobacteriaceae</taxon>
        <taxon>Escherichia</taxon>
    </lineage>
</organism>
<evidence type="ECO:0000255" key="1">
    <source>
        <dbReference type="HAMAP-Rule" id="MF_00160"/>
    </source>
</evidence>
<name>SERC_ECO7I</name>
<keyword id="KW-0028">Amino-acid biosynthesis</keyword>
<keyword id="KW-0032">Aminotransferase</keyword>
<keyword id="KW-0963">Cytoplasm</keyword>
<keyword id="KW-0663">Pyridoxal phosphate</keyword>
<keyword id="KW-0664">Pyridoxine biosynthesis</keyword>
<keyword id="KW-0718">Serine biosynthesis</keyword>
<keyword id="KW-0808">Transferase</keyword>
<sequence length="362" mass="39840">MAQIFNFSSGPAMLPAEVLKQAQQELRDWNGLGTSVMEVSHRGKEFIQVAEEAEKDFRDLLNVPSNYKVLFCHGGGRGQFAAVPLNILGDKTTADYVDAGYWAASAIKEAKKYCTPNVFDAKVTVDGLRAVKPMREWQLSDNAAYMHYCPNETIDGIAIDETPDFGKDVVVAADFSSTILSRPIDVSRYGVIYAGAQKNIGPAGLTIVIVREDLLGKANIACPSILDYSILNDNDSMFNTPPTFAWYLSGLVFKWLKANGGVAAMDKINQQKAELLYGVIDNSDFYRNDVAKANRSRMNVPFQLADSALDKLFLEESFAAGLHALKGHRVVGGMRASIYNAMPLEGVKALTDFMVEFERRHG</sequence>
<accession>B7NM68</accession>
<dbReference type="EC" id="2.6.1.52" evidence="1"/>
<dbReference type="EMBL" id="CU928164">
    <property type="protein sequence ID" value="CAR18368.1"/>
    <property type="molecule type" value="Genomic_DNA"/>
</dbReference>
<dbReference type="RefSeq" id="WP_000057143.1">
    <property type="nucleotide sequence ID" value="NC_011750.1"/>
</dbReference>
<dbReference type="RefSeq" id="YP_002408204.1">
    <property type="nucleotide sequence ID" value="NC_011750.1"/>
</dbReference>
<dbReference type="SMR" id="B7NM68"/>
<dbReference type="STRING" id="585057.ECIAI39_2241"/>
<dbReference type="KEGG" id="ect:ECIAI39_2241"/>
<dbReference type="PATRIC" id="fig|585057.6.peg.2334"/>
<dbReference type="HOGENOM" id="CLU_034866_0_2_6"/>
<dbReference type="UniPathway" id="UPA00135">
    <property type="reaction ID" value="UER00197"/>
</dbReference>
<dbReference type="UniPathway" id="UPA00244">
    <property type="reaction ID" value="UER00311"/>
</dbReference>
<dbReference type="Proteomes" id="UP000000749">
    <property type="component" value="Chromosome"/>
</dbReference>
<dbReference type="GO" id="GO:0005737">
    <property type="term" value="C:cytoplasm"/>
    <property type="evidence" value="ECO:0007669"/>
    <property type="project" value="UniProtKB-SubCell"/>
</dbReference>
<dbReference type="GO" id="GO:0004648">
    <property type="term" value="F:O-phospho-L-serine:2-oxoglutarate aminotransferase activity"/>
    <property type="evidence" value="ECO:0007669"/>
    <property type="project" value="UniProtKB-UniRule"/>
</dbReference>
<dbReference type="GO" id="GO:0030170">
    <property type="term" value="F:pyridoxal phosphate binding"/>
    <property type="evidence" value="ECO:0007669"/>
    <property type="project" value="UniProtKB-UniRule"/>
</dbReference>
<dbReference type="GO" id="GO:0006564">
    <property type="term" value="P:L-serine biosynthetic process"/>
    <property type="evidence" value="ECO:0007669"/>
    <property type="project" value="UniProtKB-UniRule"/>
</dbReference>
<dbReference type="GO" id="GO:0008615">
    <property type="term" value="P:pyridoxine biosynthetic process"/>
    <property type="evidence" value="ECO:0007669"/>
    <property type="project" value="UniProtKB-UniRule"/>
</dbReference>
<dbReference type="CDD" id="cd00611">
    <property type="entry name" value="PSAT_like"/>
    <property type="match status" value="1"/>
</dbReference>
<dbReference type="FunFam" id="3.40.640.10:FF:000010">
    <property type="entry name" value="Phosphoserine aminotransferase"/>
    <property type="match status" value="1"/>
</dbReference>
<dbReference type="FunFam" id="3.90.1150.10:FF:000006">
    <property type="entry name" value="Phosphoserine aminotransferase"/>
    <property type="match status" value="1"/>
</dbReference>
<dbReference type="Gene3D" id="3.90.1150.10">
    <property type="entry name" value="Aspartate Aminotransferase, domain 1"/>
    <property type="match status" value="1"/>
</dbReference>
<dbReference type="Gene3D" id="3.40.640.10">
    <property type="entry name" value="Type I PLP-dependent aspartate aminotransferase-like (Major domain)"/>
    <property type="match status" value="1"/>
</dbReference>
<dbReference type="HAMAP" id="MF_00160">
    <property type="entry name" value="SerC_aminotrans_5"/>
    <property type="match status" value="1"/>
</dbReference>
<dbReference type="InterPro" id="IPR000192">
    <property type="entry name" value="Aminotrans_V_dom"/>
</dbReference>
<dbReference type="InterPro" id="IPR020578">
    <property type="entry name" value="Aminotrans_V_PyrdxlP_BS"/>
</dbReference>
<dbReference type="InterPro" id="IPR022278">
    <property type="entry name" value="Pser_aminoTfrase"/>
</dbReference>
<dbReference type="InterPro" id="IPR015424">
    <property type="entry name" value="PyrdxlP-dep_Trfase"/>
</dbReference>
<dbReference type="InterPro" id="IPR015421">
    <property type="entry name" value="PyrdxlP-dep_Trfase_major"/>
</dbReference>
<dbReference type="InterPro" id="IPR015422">
    <property type="entry name" value="PyrdxlP-dep_Trfase_small"/>
</dbReference>
<dbReference type="NCBIfam" id="NF003764">
    <property type="entry name" value="PRK05355.1"/>
    <property type="match status" value="1"/>
</dbReference>
<dbReference type="NCBIfam" id="TIGR01364">
    <property type="entry name" value="serC_1"/>
    <property type="match status" value="1"/>
</dbReference>
<dbReference type="PANTHER" id="PTHR43247">
    <property type="entry name" value="PHOSPHOSERINE AMINOTRANSFERASE"/>
    <property type="match status" value="1"/>
</dbReference>
<dbReference type="PANTHER" id="PTHR43247:SF1">
    <property type="entry name" value="PHOSPHOSERINE AMINOTRANSFERASE"/>
    <property type="match status" value="1"/>
</dbReference>
<dbReference type="Pfam" id="PF00266">
    <property type="entry name" value="Aminotran_5"/>
    <property type="match status" value="1"/>
</dbReference>
<dbReference type="PIRSF" id="PIRSF000525">
    <property type="entry name" value="SerC"/>
    <property type="match status" value="1"/>
</dbReference>
<dbReference type="SUPFAM" id="SSF53383">
    <property type="entry name" value="PLP-dependent transferases"/>
    <property type="match status" value="1"/>
</dbReference>
<dbReference type="PROSITE" id="PS00595">
    <property type="entry name" value="AA_TRANSFER_CLASS_5"/>
    <property type="match status" value="1"/>
</dbReference>
<reference key="1">
    <citation type="journal article" date="2009" name="PLoS Genet.">
        <title>Organised genome dynamics in the Escherichia coli species results in highly diverse adaptive paths.</title>
        <authorList>
            <person name="Touchon M."/>
            <person name="Hoede C."/>
            <person name="Tenaillon O."/>
            <person name="Barbe V."/>
            <person name="Baeriswyl S."/>
            <person name="Bidet P."/>
            <person name="Bingen E."/>
            <person name="Bonacorsi S."/>
            <person name="Bouchier C."/>
            <person name="Bouvet O."/>
            <person name="Calteau A."/>
            <person name="Chiapello H."/>
            <person name="Clermont O."/>
            <person name="Cruveiller S."/>
            <person name="Danchin A."/>
            <person name="Diard M."/>
            <person name="Dossat C."/>
            <person name="Karoui M.E."/>
            <person name="Frapy E."/>
            <person name="Garry L."/>
            <person name="Ghigo J.M."/>
            <person name="Gilles A.M."/>
            <person name="Johnson J."/>
            <person name="Le Bouguenec C."/>
            <person name="Lescat M."/>
            <person name="Mangenot S."/>
            <person name="Martinez-Jehanne V."/>
            <person name="Matic I."/>
            <person name="Nassif X."/>
            <person name="Oztas S."/>
            <person name="Petit M.A."/>
            <person name="Pichon C."/>
            <person name="Rouy Z."/>
            <person name="Ruf C.S."/>
            <person name="Schneider D."/>
            <person name="Tourret J."/>
            <person name="Vacherie B."/>
            <person name="Vallenet D."/>
            <person name="Medigue C."/>
            <person name="Rocha E.P.C."/>
            <person name="Denamur E."/>
        </authorList>
    </citation>
    <scope>NUCLEOTIDE SEQUENCE [LARGE SCALE GENOMIC DNA]</scope>
    <source>
        <strain>IAI39 / ExPEC</strain>
    </source>
</reference>
<comment type="function">
    <text evidence="1">Catalyzes the reversible conversion of 3-phosphohydroxypyruvate to phosphoserine and of 3-hydroxy-2-oxo-4-phosphonooxybutanoate to phosphohydroxythreonine.</text>
</comment>
<comment type="catalytic activity">
    <reaction evidence="1">
        <text>O-phospho-L-serine + 2-oxoglutarate = 3-phosphooxypyruvate + L-glutamate</text>
        <dbReference type="Rhea" id="RHEA:14329"/>
        <dbReference type="ChEBI" id="CHEBI:16810"/>
        <dbReference type="ChEBI" id="CHEBI:18110"/>
        <dbReference type="ChEBI" id="CHEBI:29985"/>
        <dbReference type="ChEBI" id="CHEBI:57524"/>
        <dbReference type="EC" id="2.6.1.52"/>
    </reaction>
</comment>
<comment type="catalytic activity">
    <reaction evidence="1">
        <text>4-(phosphooxy)-L-threonine + 2-oxoglutarate = (R)-3-hydroxy-2-oxo-4-phosphooxybutanoate + L-glutamate</text>
        <dbReference type="Rhea" id="RHEA:16573"/>
        <dbReference type="ChEBI" id="CHEBI:16810"/>
        <dbReference type="ChEBI" id="CHEBI:29985"/>
        <dbReference type="ChEBI" id="CHEBI:58452"/>
        <dbReference type="ChEBI" id="CHEBI:58538"/>
        <dbReference type="EC" id="2.6.1.52"/>
    </reaction>
</comment>
<comment type="cofactor">
    <cofactor evidence="1">
        <name>pyridoxal 5'-phosphate</name>
        <dbReference type="ChEBI" id="CHEBI:597326"/>
    </cofactor>
    <text evidence="1">Binds 1 pyridoxal phosphate per subunit.</text>
</comment>
<comment type="pathway">
    <text evidence="1">Amino-acid biosynthesis; L-serine biosynthesis; L-serine from 3-phospho-D-glycerate: step 2/3.</text>
</comment>
<comment type="pathway">
    <text evidence="1">Cofactor biosynthesis; pyridoxine 5'-phosphate biosynthesis; pyridoxine 5'-phosphate from D-erythrose 4-phosphate: step 3/5.</text>
</comment>
<comment type="subunit">
    <text evidence="1">Homodimer.</text>
</comment>
<comment type="subcellular location">
    <subcellularLocation>
        <location evidence="1">Cytoplasm</location>
    </subcellularLocation>
</comment>
<comment type="similarity">
    <text evidence="1">Belongs to the class-V pyridoxal-phosphate-dependent aminotransferase family. SerC subfamily.</text>
</comment>
<proteinExistence type="inferred from homology"/>